<proteinExistence type="inferred from homology"/>
<sequence length="95" mass="10315">MSVDAQTVRRIAHLARIAVSDAEVPPLQDELNAILAFVEQLGAVDVSGVEPMTSVTPMAMKQREDAVTDGGYARDIVFNAPLTEDNYFLVPKVVE</sequence>
<gene>
    <name evidence="1" type="primary">gatC</name>
    <name type="ordered locus">Mnod_3317</name>
</gene>
<reference key="1">
    <citation type="submission" date="2009-01" db="EMBL/GenBank/DDBJ databases">
        <title>Complete sequence of chromosome of Methylobacterium nodulans ORS 2060.</title>
        <authorList>
            <consortium name="US DOE Joint Genome Institute"/>
            <person name="Lucas S."/>
            <person name="Copeland A."/>
            <person name="Lapidus A."/>
            <person name="Glavina del Rio T."/>
            <person name="Dalin E."/>
            <person name="Tice H."/>
            <person name="Bruce D."/>
            <person name="Goodwin L."/>
            <person name="Pitluck S."/>
            <person name="Sims D."/>
            <person name="Brettin T."/>
            <person name="Detter J.C."/>
            <person name="Han C."/>
            <person name="Larimer F."/>
            <person name="Land M."/>
            <person name="Hauser L."/>
            <person name="Kyrpides N."/>
            <person name="Ivanova N."/>
            <person name="Marx C.J."/>
            <person name="Richardson P."/>
        </authorList>
    </citation>
    <scope>NUCLEOTIDE SEQUENCE [LARGE SCALE GENOMIC DNA]</scope>
    <source>
        <strain>LMG 21967 / CNCM I-2342 / ORS 2060</strain>
    </source>
</reference>
<organism>
    <name type="scientific">Methylobacterium nodulans (strain LMG 21967 / CNCM I-2342 / ORS 2060)</name>
    <dbReference type="NCBI Taxonomy" id="460265"/>
    <lineage>
        <taxon>Bacteria</taxon>
        <taxon>Pseudomonadati</taxon>
        <taxon>Pseudomonadota</taxon>
        <taxon>Alphaproteobacteria</taxon>
        <taxon>Hyphomicrobiales</taxon>
        <taxon>Methylobacteriaceae</taxon>
        <taxon>Methylobacterium</taxon>
    </lineage>
</organism>
<accession>B8IL52</accession>
<protein>
    <recommendedName>
        <fullName evidence="1">Aspartyl/glutamyl-tRNA(Asn/Gln) amidotransferase subunit C</fullName>
        <shortName evidence="1">Asp/Glu-ADT subunit C</shortName>
        <ecNumber evidence="1">6.3.5.-</ecNumber>
    </recommendedName>
</protein>
<name>GATC_METNO</name>
<evidence type="ECO:0000255" key="1">
    <source>
        <dbReference type="HAMAP-Rule" id="MF_00122"/>
    </source>
</evidence>
<comment type="function">
    <text evidence="1">Allows the formation of correctly charged Asn-tRNA(Asn) or Gln-tRNA(Gln) through the transamidation of misacylated Asp-tRNA(Asn) or Glu-tRNA(Gln) in organisms which lack either or both of asparaginyl-tRNA or glutaminyl-tRNA synthetases. The reaction takes place in the presence of glutamine and ATP through an activated phospho-Asp-tRNA(Asn) or phospho-Glu-tRNA(Gln).</text>
</comment>
<comment type="catalytic activity">
    <reaction evidence="1">
        <text>L-glutamyl-tRNA(Gln) + L-glutamine + ATP + H2O = L-glutaminyl-tRNA(Gln) + L-glutamate + ADP + phosphate + H(+)</text>
        <dbReference type="Rhea" id="RHEA:17521"/>
        <dbReference type="Rhea" id="RHEA-COMP:9681"/>
        <dbReference type="Rhea" id="RHEA-COMP:9684"/>
        <dbReference type="ChEBI" id="CHEBI:15377"/>
        <dbReference type="ChEBI" id="CHEBI:15378"/>
        <dbReference type="ChEBI" id="CHEBI:29985"/>
        <dbReference type="ChEBI" id="CHEBI:30616"/>
        <dbReference type="ChEBI" id="CHEBI:43474"/>
        <dbReference type="ChEBI" id="CHEBI:58359"/>
        <dbReference type="ChEBI" id="CHEBI:78520"/>
        <dbReference type="ChEBI" id="CHEBI:78521"/>
        <dbReference type="ChEBI" id="CHEBI:456216"/>
    </reaction>
</comment>
<comment type="catalytic activity">
    <reaction evidence="1">
        <text>L-aspartyl-tRNA(Asn) + L-glutamine + ATP + H2O = L-asparaginyl-tRNA(Asn) + L-glutamate + ADP + phosphate + 2 H(+)</text>
        <dbReference type="Rhea" id="RHEA:14513"/>
        <dbReference type="Rhea" id="RHEA-COMP:9674"/>
        <dbReference type="Rhea" id="RHEA-COMP:9677"/>
        <dbReference type="ChEBI" id="CHEBI:15377"/>
        <dbReference type="ChEBI" id="CHEBI:15378"/>
        <dbReference type="ChEBI" id="CHEBI:29985"/>
        <dbReference type="ChEBI" id="CHEBI:30616"/>
        <dbReference type="ChEBI" id="CHEBI:43474"/>
        <dbReference type="ChEBI" id="CHEBI:58359"/>
        <dbReference type="ChEBI" id="CHEBI:78515"/>
        <dbReference type="ChEBI" id="CHEBI:78516"/>
        <dbReference type="ChEBI" id="CHEBI:456216"/>
    </reaction>
</comment>
<comment type="subunit">
    <text evidence="1">Heterotrimer of A, B and C subunits.</text>
</comment>
<comment type="similarity">
    <text evidence="1">Belongs to the GatC family.</text>
</comment>
<dbReference type="EC" id="6.3.5.-" evidence="1"/>
<dbReference type="EMBL" id="CP001349">
    <property type="protein sequence ID" value="ACL58240.1"/>
    <property type="molecule type" value="Genomic_DNA"/>
</dbReference>
<dbReference type="RefSeq" id="WP_015929903.1">
    <property type="nucleotide sequence ID" value="NC_011894.1"/>
</dbReference>
<dbReference type="SMR" id="B8IL52"/>
<dbReference type="STRING" id="460265.Mnod_3317"/>
<dbReference type="KEGG" id="mno:Mnod_3317"/>
<dbReference type="eggNOG" id="COG0721">
    <property type="taxonomic scope" value="Bacteria"/>
</dbReference>
<dbReference type="HOGENOM" id="CLU_105899_2_0_5"/>
<dbReference type="OrthoDB" id="9794326at2"/>
<dbReference type="Proteomes" id="UP000008207">
    <property type="component" value="Chromosome"/>
</dbReference>
<dbReference type="GO" id="GO:0050566">
    <property type="term" value="F:asparaginyl-tRNA synthase (glutamine-hydrolyzing) activity"/>
    <property type="evidence" value="ECO:0007669"/>
    <property type="project" value="RHEA"/>
</dbReference>
<dbReference type="GO" id="GO:0005524">
    <property type="term" value="F:ATP binding"/>
    <property type="evidence" value="ECO:0007669"/>
    <property type="project" value="UniProtKB-KW"/>
</dbReference>
<dbReference type="GO" id="GO:0050567">
    <property type="term" value="F:glutaminyl-tRNA synthase (glutamine-hydrolyzing) activity"/>
    <property type="evidence" value="ECO:0007669"/>
    <property type="project" value="UniProtKB-UniRule"/>
</dbReference>
<dbReference type="GO" id="GO:0070681">
    <property type="term" value="P:glutaminyl-tRNAGln biosynthesis via transamidation"/>
    <property type="evidence" value="ECO:0007669"/>
    <property type="project" value="TreeGrafter"/>
</dbReference>
<dbReference type="GO" id="GO:0006450">
    <property type="term" value="P:regulation of translational fidelity"/>
    <property type="evidence" value="ECO:0007669"/>
    <property type="project" value="InterPro"/>
</dbReference>
<dbReference type="GO" id="GO:0006412">
    <property type="term" value="P:translation"/>
    <property type="evidence" value="ECO:0007669"/>
    <property type="project" value="UniProtKB-UniRule"/>
</dbReference>
<dbReference type="Gene3D" id="1.10.20.60">
    <property type="entry name" value="Glu-tRNAGln amidotransferase C subunit, N-terminal domain"/>
    <property type="match status" value="1"/>
</dbReference>
<dbReference type="HAMAP" id="MF_00122">
    <property type="entry name" value="GatC"/>
    <property type="match status" value="1"/>
</dbReference>
<dbReference type="InterPro" id="IPR036113">
    <property type="entry name" value="Asp/Glu-ADT_sf_sub_c"/>
</dbReference>
<dbReference type="InterPro" id="IPR003837">
    <property type="entry name" value="GatC"/>
</dbReference>
<dbReference type="NCBIfam" id="TIGR00135">
    <property type="entry name" value="gatC"/>
    <property type="match status" value="1"/>
</dbReference>
<dbReference type="PANTHER" id="PTHR15004">
    <property type="entry name" value="GLUTAMYL-TRNA(GLN) AMIDOTRANSFERASE SUBUNIT C, MITOCHONDRIAL"/>
    <property type="match status" value="1"/>
</dbReference>
<dbReference type="PANTHER" id="PTHR15004:SF0">
    <property type="entry name" value="GLUTAMYL-TRNA(GLN) AMIDOTRANSFERASE SUBUNIT C, MITOCHONDRIAL"/>
    <property type="match status" value="1"/>
</dbReference>
<dbReference type="Pfam" id="PF02686">
    <property type="entry name" value="GatC"/>
    <property type="match status" value="1"/>
</dbReference>
<dbReference type="SUPFAM" id="SSF141000">
    <property type="entry name" value="Glu-tRNAGln amidotransferase C subunit"/>
    <property type="match status" value="1"/>
</dbReference>
<keyword id="KW-0067">ATP-binding</keyword>
<keyword id="KW-0436">Ligase</keyword>
<keyword id="KW-0547">Nucleotide-binding</keyword>
<keyword id="KW-0648">Protein biosynthesis</keyword>
<keyword id="KW-1185">Reference proteome</keyword>
<feature type="chain" id="PRO_1000122573" description="Aspartyl/glutamyl-tRNA(Asn/Gln) amidotransferase subunit C">
    <location>
        <begin position="1"/>
        <end position="95"/>
    </location>
</feature>